<keyword id="KW-1167">Clathrin- and caveolin-independent endocytosis of virus by host</keyword>
<keyword id="KW-1165">Clathrin-mediated endocytosis of virus by host</keyword>
<keyword id="KW-1015">Disulfide bond</keyword>
<keyword id="KW-1170">Fusion of virus membrane with host endosomal membrane</keyword>
<keyword id="KW-1168">Fusion of virus membrane with host membrane</keyword>
<keyword id="KW-0325">Glycoprotein</keyword>
<keyword id="KW-0348">Hemagglutinin</keyword>
<keyword id="KW-1032">Host cell membrane</keyword>
<keyword id="KW-1043">Host membrane</keyword>
<keyword id="KW-0945">Host-virus interaction</keyword>
<keyword id="KW-0449">Lipoprotein</keyword>
<keyword id="KW-0472">Membrane</keyword>
<keyword id="KW-0564">Palmitate</keyword>
<keyword id="KW-0732">Signal</keyword>
<keyword id="KW-0812">Transmembrane</keyword>
<keyword id="KW-1133">Transmembrane helix</keyword>
<keyword id="KW-1161">Viral attachment to host cell</keyword>
<keyword id="KW-0261">Viral envelope protein</keyword>
<keyword id="KW-1162">Viral penetration into host cytoplasm</keyword>
<keyword id="KW-0946">Virion</keyword>
<keyword id="KW-1164">Virus endocytosis by host</keyword>
<keyword id="KW-1160">Virus entry into host cell</keyword>
<name>HEMA_I80A2</name>
<sequence>MNTQILVFIACVLIEAKGDKICLGHHAVANGTKVNTLTERGIEVVNATETVETANIGKICTQGKRPTDLGQCGLLGTLIGPPQCDQFLEFESNLIIERREGNDVCYPGKFTNEESLRQILRGSGGVDKESMGFTYSGIRTNGTTSACRRSGSSFYAEMKWLLSNSDNAAFPQMTKSYRNPRNKPALIVWGIHHSGSTTEQTRLYGSGNKLITVGSSKYQQSFTPSPGARPQVNGQSGRIDFHWLLLDPNDTVTFTFNGAFIAPNRASFFRGESLGVQSDVPLDSNCGGDCFHSGGTIVSSLPFQNINSRTVGKCPRYVKQPSLLLATGMRNVPENPKTRGLFGAIAGFIENGWEGLIDGWYGFRHQNAQGEGTAADYKSTQSAIDQITGKLNRLIDKTNQQFELIDNEFNEIEQQIGNVINWTRDSMTEVWSYNAELLVAMENQHTIDLADSEMNKLYERVRKQLRENAEEDGTGCFEIFHKCDDQCMESIRNNTYDHTQYRAKSLQNRIQIDPVKLSSGYKDIILWFSFGASCFLLLAIAMGLVFICIKNGNMRCTICI</sequence>
<gene>
    <name evidence="1" type="primary">HA</name>
</gene>
<feature type="signal peptide" evidence="1">
    <location>
        <begin position="1"/>
        <end position="18"/>
    </location>
</feature>
<feature type="chain" id="PRO_0000440483" description="Hemagglutinin" evidence="1">
    <location>
        <begin position="19"/>
        <end position="560"/>
    </location>
</feature>
<feature type="chain" id="PRO_0000280199" description="Hemagglutinin HA1 chain" evidence="1">
    <location>
        <begin position="19"/>
        <end position="338"/>
    </location>
</feature>
<feature type="chain" id="PRO_0000280200" description="Hemagglutinin HA2 chain" evidence="1">
    <location>
        <begin position="340"/>
        <end position="560"/>
    </location>
</feature>
<feature type="topological domain" description="Extracellular" evidence="1">
    <location>
        <begin position="19"/>
        <end position="523"/>
    </location>
</feature>
<feature type="transmembrane region" description="Helical" evidence="1">
    <location>
        <begin position="524"/>
        <end position="544"/>
    </location>
</feature>
<feature type="topological domain" description="Cytoplasmic" evidence="1">
    <location>
        <begin position="545"/>
        <end position="560"/>
    </location>
</feature>
<feature type="site" description="Cleavage; by host" evidence="1">
    <location>
        <begin position="339"/>
        <end position="340"/>
    </location>
</feature>
<feature type="lipid moiety-binding region" description="S-palmitoyl cysteine; by host" evidence="1">
    <location>
        <position position="556"/>
    </location>
</feature>
<feature type="lipid moiety-binding region" description="S-palmitoyl cysteine; by host" evidence="1">
    <location>
        <position position="559"/>
    </location>
</feature>
<feature type="glycosylation site" description="N-linked (GlcNAc...) asparagine; by host" evidence="1">
    <location>
        <position position="30"/>
    </location>
</feature>
<feature type="glycosylation site" description="N-linked (GlcNAc...) asparagine; by host" evidence="1">
    <location>
        <position position="46"/>
    </location>
</feature>
<feature type="glycosylation site" description="N-linked (GlcNAc...) asparagine; by host" evidence="1">
    <location>
        <position position="141"/>
    </location>
</feature>
<feature type="glycosylation site" description="N-linked (GlcNAc...) asparagine; by host" evidence="1">
    <location>
        <position position="249"/>
    </location>
</feature>
<feature type="glycosylation site" description="N-linked (GlcNAc...) asparagine; by host" evidence="1">
    <location>
        <position position="421"/>
    </location>
</feature>
<feature type="glycosylation site" description="N-linked (GlcNAc...) asparagine; by host" evidence="1">
    <location>
        <position position="493"/>
    </location>
</feature>
<feature type="disulfide bond" description="Interchain (between HA1 and HA2 chains)" evidence="1">
    <location>
        <begin position="22"/>
        <end position="476"/>
    </location>
</feature>
<feature type="disulfide bond" evidence="1">
    <location>
        <begin position="60"/>
        <end position="286"/>
    </location>
</feature>
<feature type="disulfide bond" evidence="1">
    <location>
        <begin position="72"/>
        <end position="84"/>
    </location>
</feature>
<feature type="disulfide bond" evidence="1">
    <location>
        <begin position="105"/>
        <end position="147"/>
    </location>
</feature>
<feature type="disulfide bond" evidence="1">
    <location>
        <begin position="290"/>
        <end position="314"/>
    </location>
</feature>
<feature type="disulfide bond" evidence="1">
    <location>
        <begin position="483"/>
        <end position="487"/>
    </location>
</feature>
<feature type="sequence variant" description="In strain: SC35M mouse-adapted.">
    <original>T</original>
    <variation>I</variation>
    <location>
        <position position="111"/>
    </location>
</feature>
<feature type="sequence variant" description="In strain: SC35M mouse-adapted.">
    <original>D</original>
    <variation>N</variation>
    <location>
        <position position="240"/>
    </location>
</feature>
<feature type="sequence variant" description="In strain: SC35M mouse-adapted.">
    <original>R</original>
    <variation>RRRR</variation>
    <location>
        <position position="339"/>
    </location>
</feature>
<feature type="sequence variant" description="In strain: SC35M mouse-adapted.">
    <original>K</original>
    <variation>E</variation>
    <location>
        <position position="504"/>
    </location>
</feature>
<reference key="1">
    <citation type="journal article" date="1983" name="Virology">
        <title>Sequence of the hemagglutinin gene from influenza virus A/Seal/Mass/1/80.</title>
        <authorList>
            <person name="Naeve C.W."/>
            <person name="Webster R.G."/>
        </authorList>
    </citation>
    <scope>NUCLEOTIDE SEQUENCE [GENOMIC RNA]</scope>
</reference>
<reference key="2">
    <citation type="journal article" date="2005" name="Proc. Natl. Acad. Sci. U.S.A.">
        <title>The viral polymerase mediates adaptation of an avian influenza virus to a mammalian host.</title>
        <authorList>
            <person name="Gabriel G."/>
            <person name="Dauber B."/>
            <person name="Wolff T."/>
            <person name="Planz O."/>
            <person name="Klenk H.D."/>
            <person name="Stech J."/>
        </authorList>
    </citation>
    <scope>NUCLEOTIDE SEQUENCE [GENOMIC RNA]</scope>
    <source>
        <strain>SC35M mouse-adapted</strain>
    </source>
</reference>
<proteinExistence type="inferred from homology"/>
<accession>Q6LEJ4</accession>
<accession>Q2VC96</accession>
<protein>
    <recommendedName>
        <fullName evidence="1">Hemagglutinin</fullName>
    </recommendedName>
    <component>
        <recommendedName>
            <fullName evidence="1">Hemagglutinin HA1 chain</fullName>
        </recommendedName>
    </component>
    <component>
        <recommendedName>
            <fullName evidence="1">Hemagglutinin HA2 chain</fullName>
        </recommendedName>
    </component>
</protein>
<comment type="function">
    <text evidence="1">Binds to sialic acid-containing receptors on the cell surface, bringing about the attachment of the virus particle to the cell. This attachment induces virion internalization either through clathrin-dependent endocytosis or through clathrin- and caveolin-independent pathway. Plays a major role in the determination of host range restriction and virulence. Class I viral fusion protein. Responsible for penetration of the virus into the cell cytoplasm by mediating the fusion of the membrane of the endocytosed virus particle with the endosomal membrane. Low pH in endosomes induces an irreversible conformational change in HA2, releasing the fusion hydrophobic peptide. Several trimers are required to form a competent fusion pore.</text>
</comment>
<comment type="subunit">
    <text evidence="1">Homotrimer of disulfide-linked HA1-HA2.</text>
</comment>
<comment type="subcellular location">
    <subcellularLocation>
        <location evidence="1">Virion membrane</location>
        <topology evidence="1">Single-pass type I membrane protein</topology>
    </subcellularLocation>
    <subcellularLocation>
        <location evidence="1">Host apical cell membrane</location>
        <topology evidence="1">Single-pass type I membrane protein</topology>
    </subcellularLocation>
    <text evidence="1">Targeted to the apical plasma membrane in epithelial polarized cells through a signal present in the transmembrane domain. Associated with glycosphingolipid- and cholesterol-enriched detergent-resistant lipid rafts.</text>
</comment>
<comment type="PTM">
    <text evidence="1">Palmitoylated.</text>
</comment>
<comment type="PTM">
    <text evidence="1">In natural infection, inactive HA is matured into HA1 and HA2 outside the cell by one or more trypsin-like, arginine-specific endoprotease secreted by the bronchial epithelial cells. One identified protease that may be involved in this process is secreted in lungs by club cells.</text>
</comment>
<comment type="miscellaneous">
    <text>Major glycoprotein, comprises over 80% of the envelope proteins present in virus particle.</text>
</comment>
<comment type="miscellaneous">
    <text>The extent of infection into host organism is determined by HA. Influenza viruses bud from the apical surface of polarized epithelial cells (e.g. bronchial epithelial cells) into lumen of lungs and are therefore usually pneumotropic. The reason is that HA is cleaved by tryptase clara which is restricted to lungs. However, HAs of H5 and H7 pantropic avian viruses subtypes can be cleaved by furin and subtilisin-type enzymes, allowing the virus to grow in other organs than lungs.</text>
</comment>
<comment type="miscellaneous">
    <text>The influenza A genome consist of 8 RNA segments. Genetic variation of hemagglutinin and/or neuraminidase genes results in the emergence of new influenza strains. The mechanism of variation can be the result of point mutations or the result of genetic reassortment between segments of two different strains.</text>
</comment>
<comment type="miscellaneous">
    <text evidence="2">SC35 was derived from A/Seal/Massachussetts/1/80 (H7N7) by serial passages in chicken embryo cells, thereby acquiring a multibasic cleavage site in its hemagglutinin (HA) and becoming 100% lethal for chickens. SC35 was then passaged 11 times in mouse lung, yielding the mouse-adapted variant SC35M.</text>
</comment>
<comment type="similarity">
    <text evidence="1">Belongs to the influenza viruses hemagglutinin family.</text>
</comment>
<dbReference type="EMBL" id="K00429">
    <property type="protein sequence ID" value="AAR96248.1"/>
    <property type="molecule type" value="Genomic_RNA"/>
</dbReference>
<dbReference type="EMBL" id="DQ266094">
    <property type="protein sequence ID" value="ABB90267.1"/>
    <property type="molecule type" value="Genomic_RNA"/>
</dbReference>
<dbReference type="SMR" id="Q6LEJ4"/>
<dbReference type="GlyCosmos" id="Q6LEJ4">
    <property type="glycosylation" value="6 sites, No reported glycans"/>
</dbReference>
<dbReference type="PRO" id="PR:Q6LEJ4"/>
<dbReference type="Proteomes" id="UP000008576">
    <property type="component" value="Genome"/>
</dbReference>
<dbReference type="GO" id="GO:0020002">
    <property type="term" value="C:host cell plasma membrane"/>
    <property type="evidence" value="ECO:0007669"/>
    <property type="project" value="UniProtKB-SubCell"/>
</dbReference>
<dbReference type="GO" id="GO:0016020">
    <property type="term" value="C:membrane"/>
    <property type="evidence" value="ECO:0007669"/>
    <property type="project" value="UniProtKB-UniRule"/>
</dbReference>
<dbReference type="GO" id="GO:0019031">
    <property type="term" value="C:viral envelope"/>
    <property type="evidence" value="ECO:0007669"/>
    <property type="project" value="UniProtKB-UniRule"/>
</dbReference>
<dbReference type="GO" id="GO:0055036">
    <property type="term" value="C:virion membrane"/>
    <property type="evidence" value="ECO:0007669"/>
    <property type="project" value="UniProtKB-SubCell"/>
</dbReference>
<dbReference type="GO" id="GO:0046789">
    <property type="term" value="F:host cell surface receptor binding"/>
    <property type="evidence" value="ECO:0007669"/>
    <property type="project" value="UniProtKB-UniRule"/>
</dbReference>
<dbReference type="GO" id="GO:0075512">
    <property type="term" value="P:clathrin-dependent endocytosis of virus by host cell"/>
    <property type="evidence" value="ECO:0007669"/>
    <property type="project" value="UniProtKB-UniRule"/>
</dbReference>
<dbReference type="GO" id="GO:0039654">
    <property type="term" value="P:fusion of virus membrane with host endosome membrane"/>
    <property type="evidence" value="ECO:0007669"/>
    <property type="project" value="UniProtKB-UniRule"/>
</dbReference>
<dbReference type="GO" id="GO:0019064">
    <property type="term" value="P:fusion of virus membrane with host plasma membrane"/>
    <property type="evidence" value="ECO:0007669"/>
    <property type="project" value="InterPro"/>
</dbReference>
<dbReference type="GO" id="GO:0046761">
    <property type="term" value="P:viral budding from plasma membrane"/>
    <property type="evidence" value="ECO:0007669"/>
    <property type="project" value="UniProtKB-UniRule"/>
</dbReference>
<dbReference type="GO" id="GO:0019062">
    <property type="term" value="P:virion attachment to host cell"/>
    <property type="evidence" value="ECO:0007669"/>
    <property type="project" value="UniProtKB-KW"/>
</dbReference>
<dbReference type="Gene3D" id="3.90.20.10">
    <property type="match status" value="1"/>
</dbReference>
<dbReference type="Gene3D" id="3.90.209.20">
    <property type="match status" value="1"/>
</dbReference>
<dbReference type="HAMAP" id="MF_04072">
    <property type="entry name" value="INFV_HEMA"/>
    <property type="match status" value="1"/>
</dbReference>
<dbReference type="InterPro" id="IPR008980">
    <property type="entry name" value="Capsid_hemagglutn"/>
</dbReference>
<dbReference type="InterPro" id="IPR013828">
    <property type="entry name" value="Hemagglutn_HA1_a/b_dom_sf"/>
</dbReference>
<dbReference type="InterPro" id="IPR000149">
    <property type="entry name" value="Hemagglutn_influenz_A"/>
</dbReference>
<dbReference type="InterPro" id="IPR001364">
    <property type="entry name" value="Hemagglutn_influenz_A/B"/>
</dbReference>
<dbReference type="Pfam" id="PF00509">
    <property type="entry name" value="Hemagglutinin"/>
    <property type="match status" value="1"/>
</dbReference>
<dbReference type="PRINTS" id="PR00330">
    <property type="entry name" value="HEMAGGLUTN1"/>
</dbReference>
<dbReference type="PRINTS" id="PR00329">
    <property type="entry name" value="HEMAGGLUTN12"/>
</dbReference>
<dbReference type="SUPFAM" id="SSF58064">
    <property type="entry name" value="Influenza hemagglutinin (stalk)"/>
    <property type="match status" value="1"/>
</dbReference>
<dbReference type="SUPFAM" id="SSF49818">
    <property type="entry name" value="Viral protein domain"/>
    <property type="match status" value="1"/>
</dbReference>
<evidence type="ECO:0000255" key="1">
    <source>
        <dbReference type="HAMAP-Rule" id="MF_04072"/>
    </source>
</evidence>
<evidence type="ECO:0000305" key="2"/>
<organismHost>
    <name type="scientific">Aves</name>
    <dbReference type="NCBI Taxonomy" id="8782"/>
</organismHost>
<organismHost>
    <name type="scientific">Equus caballus</name>
    <name type="common">Horse</name>
    <dbReference type="NCBI Taxonomy" id="9796"/>
</organismHost>
<organismHost>
    <name type="scientific">Homo sapiens</name>
    <name type="common">Human</name>
    <dbReference type="NCBI Taxonomy" id="9606"/>
</organismHost>
<organismHost>
    <name type="scientific">Phocidae</name>
    <name type="common">true seals</name>
    <dbReference type="NCBI Taxonomy" id="9709"/>
</organismHost>
<organism>
    <name type="scientific">Influenza A virus (strain A/Seal/Massachusetts/1/1980 H7N7)</name>
    <dbReference type="NCBI Taxonomy" id="384493"/>
    <lineage>
        <taxon>Viruses</taxon>
        <taxon>Riboviria</taxon>
        <taxon>Orthornavirae</taxon>
        <taxon>Negarnaviricota</taxon>
        <taxon>Polyploviricotina</taxon>
        <taxon>Insthoviricetes</taxon>
        <taxon>Articulavirales</taxon>
        <taxon>Orthomyxoviridae</taxon>
        <taxon>Alphainfluenzavirus</taxon>
        <taxon>Alphainfluenzavirus influenzae</taxon>
        <taxon>Influenza A virus</taxon>
    </lineage>
</organism>